<accession>Q21HA2</accession>
<sequence length="86" mass="9494">MSKGHSLQDPYLNVLRKERIPVSIYLVNGIKLQGQVESFDQFVVLLKNTVSQMVYKHAISTVVPSRPVRVPLLNADGTSAEDENGG</sequence>
<keyword id="KW-1185">Reference proteome</keyword>
<keyword id="KW-0694">RNA-binding</keyword>
<keyword id="KW-0346">Stress response</keyword>
<name>HFQ_SACD2</name>
<proteinExistence type="inferred from homology"/>
<organism>
    <name type="scientific">Saccharophagus degradans (strain 2-40 / ATCC 43961 / DSM 17024)</name>
    <dbReference type="NCBI Taxonomy" id="203122"/>
    <lineage>
        <taxon>Bacteria</taxon>
        <taxon>Pseudomonadati</taxon>
        <taxon>Pseudomonadota</taxon>
        <taxon>Gammaproteobacteria</taxon>
        <taxon>Cellvibrionales</taxon>
        <taxon>Cellvibrionaceae</taxon>
        <taxon>Saccharophagus</taxon>
    </lineage>
</organism>
<protein>
    <recommendedName>
        <fullName evidence="1">RNA-binding protein Hfq</fullName>
    </recommendedName>
</protein>
<gene>
    <name evidence="1" type="primary">hfq</name>
    <name type="ordered locus">Sde_2667</name>
</gene>
<dbReference type="EMBL" id="CP000282">
    <property type="protein sequence ID" value="ABD81927.1"/>
    <property type="molecule type" value="Genomic_DNA"/>
</dbReference>
<dbReference type="RefSeq" id="WP_011469144.1">
    <property type="nucleotide sequence ID" value="NC_007912.1"/>
</dbReference>
<dbReference type="SMR" id="Q21HA2"/>
<dbReference type="STRING" id="203122.Sde_2667"/>
<dbReference type="GeneID" id="98614325"/>
<dbReference type="KEGG" id="sde:Sde_2667"/>
<dbReference type="eggNOG" id="COG1923">
    <property type="taxonomic scope" value="Bacteria"/>
</dbReference>
<dbReference type="HOGENOM" id="CLU_113688_2_2_6"/>
<dbReference type="OrthoDB" id="9799751at2"/>
<dbReference type="Proteomes" id="UP000001947">
    <property type="component" value="Chromosome"/>
</dbReference>
<dbReference type="GO" id="GO:0005829">
    <property type="term" value="C:cytosol"/>
    <property type="evidence" value="ECO:0007669"/>
    <property type="project" value="TreeGrafter"/>
</dbReference>
<dbReference type="GO" id="GO:0003723">
    <property type="term" value="F:RNA binding"/>
    <property type="evidence" value="ECO:0007669"/>
    <property type="project" value="UniProtKB-UniRule"/>
</dbReference>
<dbReference type="GO" id="GO:0006355">
    <property type="term" value="P:regulation of DNA-templated transcription"/>
    <property type="evidence" value="ECO:0007669"/>
    <property type="project" value="InterPro"/>
</dbReference>
<dbReference type="GO" id="GO:0043487">
    <property type="term" value="P:regulation of RNA stability"/>
    <property type="evidence" value="ECO:0007669"/>
    <property type="project" value="TreeGrafter"/>
</dbReference>
<dbReference type="GO" id="GO:0045974">
    <property type="term" value="P:regulation of translation, ncRNA-mediated"/>
    <property type="evidence" value="ECO:0007669"/>
    <property type="project" value="TreeGrafter"/>
</dbReference>
<dbReference type="CDD" id="cd01716">
    <property type="entry name" value="Hfq"/>
    <property type="match status" value="1"/>
</dbReference>
<dbReference type="FunFam" id="2.30.30.100:FF:000001">
    <property type="entry name" value="RNA-binding protein Hfq"/>
    <property type="match status" value="1"/>
</dbReference>
<dbReference type="Gene3D" id="2.30.30.100">
    <property type="match status" value="1"/>
</dbReference>
<dbReference type="HAMAP" id="MF_00436">
    <property type="entry name" value="Hfq"/>
    <property type="match status" value="1"/>
</dbReference>
<dbReference type="InterPro" id="IPR005001">
    <property type="entry name" value="Hfq"/>
</dbReference>
<dbReference type="InterPro" id="IPR010920">
    <property type="entry name" value="LSM_dom_sf"/>
</dbReference>
<dbReference type="InterPro" id="IPR047575">
    <property type="entry name" value="Sm"/>
</dbReference>
<dbReference type="NCBIfam" id="TIGR02383">
    <property type="entry name" value="Hfq"/>
    <property type="match status" value="1"/>
</dbReference>
<dbReference type="NCBIfam" id="NF001602">
    <property type="entry name" value="PRK00395.1"/>
    <property type="match status" value="1"/>
</dbReference>
<dbReference type="PANTHER" id="PTHR34772">
    <property type="entry name" value="RNA-BINDING PROTEIN HFQ"/>
    <property type="match status" value="1"/>
</dbReference>
<dbReference type="PANTHER" id="PTHR34772:SF1">
    <property type="entry name" value="RNA-BINDING PROTEIN HFQ"/>
    <property type="match status" value="1"/>
</dbReference>
<dbReference type="Pfam" id="PF17209">
    <property type="entry name" value="Hfq"/>
    <property type="match status" value="1"/>
</dbReference>
<dbReference type="SUPFAM" id="SSF50182">
    <property type="entry name" value="Sm-like ribonucleoproteins"/>
    <property type="match status" value="1"/>
</dbReference>
<dbReference type="PROSITE" id="PS52002">
    <property type="entry name" value="SM"/>
    <property type="match status" value="1"/>
</dbReference>
<feature type="chain" id="PRO_0000265184" description="RNA-binding protein Hfq">
    <location>
        <begin position="1"/>
        <end position="86"/>
    </location>
</feature>
<feature type="domain" description="Sm" evidence="2">
    <location>
        <begin position="9"/>
        <end position="68"/>
    </location>
</feature>
<reference key="1">
    <citation type="journal article" date="2008" name="PLoS Genet.">
        <title>Complete genome sequence of the complex carbohydrate-degrading marine bacterium, Saccharophagus degradans strain 2-40 T.</title>
        <authorList>
            <person name="Weiner R.M."/>
            <person name="Taylor L.E. II"/>
            <person name="Henrissat B."/>
            <person name="Hauser L."/>
            <person name="Land M."/>
            <person name="Coutinho P.M."/>
            <person name="Rancurel C."/>
            <person name="Saunders E.H."/>
            <person name="Longmire A.G."/>
            <person name="Zhang H."/>
            <person name="Bayer E.A."/>
            <person name="Gilbert H.J."/>
            <person name="Larimer F."/>
            <person name="Zhulin I.B."/>
            <person name="Ekborg N.A."/>
            <person name="Lamed R."/>
            <person name="Richardson P.M."/>
            <person name="Borovok I."/>
            <person name="Hutcheson S."/>
        </authorList>
    </citation>
    <scope>NUCLEOTIDE SEQUENCE [LARGE SCALE GENOMIC DNA]</scope>
    <source>
        <strain>2-40 / ATCC 43961 / DSM 17024</strain>
    </source>
</reference>
<comment type="function">
    <text evidence="1">RNA chaperone that binds small regulatory RNA (sRNAs) and mRNAs to facilitate mRNA translational regulation in response to envelope stress, environmental stress and changes in metabolite concentrations. Also binds with high specificity to tRNAs.</text>
</comment>
<comment type="subunit">
    <text evidence="1">Homohexamer.</text>
</comment>
<comment type="similarity">
    <text evidence="1">Belongs to the Hfq family.</text>
</comment>
<evidence type="ECO:0000255" key="1">
    <source>
        <dbReference type="HAMAP-Rule" id="MF_00436"/>
    </source>
</evidence>
<evidence type="ECO:0000255" key="2">
    <source>
        <dbReference type="PROSITE-ProRule" id="PRU01346"/>
    </source>
</evidence>